<reference key="1">
    <citation type="journal article" date="2005" name="Cell Cycle">
        <title>Specific association of mouse MDC1/NFBD1 with NBS1 at sites of DNA-damage.</title>
        <authorList>
            <person name="Lee A.C."/>
            <person name="Fernandez-Capetillo O."/>
            <person name="Pisupati V."/>
            <person name="Jackson S.P."/>
            <person name="Nussenzweig A."/>
        </authorList>
    </citation>
    <scope>NUCLEOTIDE SEQUENCE [GENOMIC DNA]</scope>
    <scope>INTERACTION WITH H2AX AND NBN</scope>
    <scope>SUBCELLULAR LOCATION</scope>
</reference>
<reference key="2">
    <citation type="journal article" date="2004" name="Genome Res.">
        <title>The status, quality, and expansion of the NIH full-length cDNA project: the Mammalian Gene Collection (MGC).</title>
        <authorList>
            <consortium name="The MGC Project Team"/>
        </authorList>
    </citation>
    <scope>NUCLEOTIDE SEQUENCE [LARGE SCALE MRNA]</scope>
    <source>
        <strain>C57BL/6J</strain>
        <tissue>Brain</tissue>
    </source>
</reference>
<reference key="3">
    <citation type="journal article" date="2003" name="DNA Res.">
        <title>Prediction of the coding sequences of mouse homologues of KIAA gene: III. The complete nucleotide sequences of 500 mouse KIAA-homologous cDNAs identified by screening of terminal sequences of cDNA clones randomly sampled from size-fractionated libraries.</title>
        <authorList>
            <person name="Okazaki N."/>
            <person name="Kikuno R."/>
            <person name="Ohara R."/>
            <person name="Inamoto S."/>
            <person name="Koseki H."/>
            <person name="Hiraoka S."/>
            <person name="Saga Y."/>
            <person name="Nagase T."/>
            <person name="Ohara O."/>
            <person name="Koga H."/>
        </authorList>
    </citation>
    <scope>NUCLEOTIDE SEQUENCE [LARGE SCALE MRNA] OF 693-1707</scope>
    <source>
        <tissue>Embryonic tail</tissue>
    </source>
</reference>
<reference key="4">
    <citation type="journal article" date="2007" name="Proc. Natl. Acad. Sci. U.S.A.">
        <title>Large-scale phosphorylation analysis of mouse liver.</title>
        <authorList>
            <person name="Villen J."/>
            <person name="Beausoleil S.A."/>
            <person name="Gerber S.A."/>
            <person name="Gygi S.P."/>
        </authorList>
    </citation>
    <scope>PHOSPHORYLATION [LARGE SCALE ANALYSIS] AT SER-168; SER-438; SER-442 AND THR-444</scope>
    <scope>IDENTIFICATION BY MASS SPECTROMETRY [LARGE SCALE ANALYSIS]</scope>
    <source>
        <tissue>Liver</tissue>
    </source>
</reference>
<reference key="5">
    <citation type="journal article" date="2009" name="Immunity">
        <title>The phagosomal proteome in interferon-gamma-activated macrophages.</title>
        <authorList>
            <person name="Trost M."/>
            <person name="English L."/>
            <person name="Lemieux S."/>
            <person name="Courcelles M."/>
            <person name="Desjardins M."/>
            <person name="Thibault P."/>
        </authorList>
    </citation>
    <scope>PHOSPHORYLATION [LARGE SCALE ANALYSIS] AT SER-168</scope>
    <scope>IDENTIFICATION BY MASS SPECTROMETRY [LARGE SCALE ANALYSIS]</scope>
</reference>
<reference key="6">
    <citation type="journal article" date="2009" name="Mol. Cell. Proteomics">
        <title>Large scale localization of protein phosphorylation by use of electron capture dissociation mass spectrometry.</title>
        <authorList>
            <person name="Sweet S.M."/>
            <person name="Bailey C.M."/>
            <person name="Cunningham D.L."/>
            <person name="Heath J.K."/>
            <person name="Cooper H.J."/>
        </authorList>
    </citation>
    <scope>PHOSPHORYLATION [LARGE SCALE ANALYSIS] AT SER-168</scope>
    <scope>IDENTIFICATION BY MASS SPECTROMETRY [LARGE SCALE ANALYSIS]</scope>
    <source>
        <tissue>Embryonic fibroblast</tissue>
    </source>
</reference>
<reference key="7">
    <citation type="journal article" date="2010" name="Cell">
        <title>A tissue-specific atlas of mouse protein phosphorylation and expression.</title>
        <authorList>
            <person name="Huttlin E.L."/>
            <person name="Jedrychowski M.P."/>
            <person name="Elias J.E."/>
            <person name="Goswami T."/>
            <person name="Rad R."/>
            <person name="Beausoleil S.A."/>
            <person name="Villen J."/>
            <person name="Haas W."/>
            <person name="Sowa M.E."/>
            <person name="Gygi S.P."/>
        </authorList>
    </citation>
    <scope>PHOSPHORYLATION [LARGE SCALE ANALYSIS] AT SER-168; SER-438; SER-442; THR-444; SER-461; THR-470; SER-492; SER-493; SER-591; SER-593; SER-595; THR-1056; SER-1104; SER-1126; SER-1128; THR-1132; THR-1297; THR-1298; SER-1435; SER-1436; SER-1439; SER-1443 AND THR-1480</scope>
    <scope>IDENTIFICATION BY MASS SPECTROMETRY [LARGE SCALE ANALYSIS]</scope>
    <source>
        <tissue>Kidney</tissue>
        <tissue>Liver</tissue>
        <tissue>Lung</tissue>
        <tissue>Pancreas</tissue>
        <tissue>Spleen</tissue>
        <tissue>Testis</tissue>
    </source>
</reference>
<reference key="8">
    <citation type="journal article" date="2012" name="Genes Cells">
        <title>HORMAD2 is essential for synapsis surveillance during meiotic prophase via the recruitment of ATR activity.</title>
        <authorList>
            <person name="Kogo H."/>
            <person name="Tsutsumi M."/>
            <person name="Inagaki H."/>
            <person name="Ohye T."/>
            <person name="Kiyonari H."/>
            <person name="Kurahashi H."/>
        </authorList>
    </citation>
    <scope>SUBCELLULAR LOCATION</scope>
</reference>
<reference key="9">
    <citation type="journal article" date="2013" name="Mol. Cell">
        <title>SIRT5-mediated lysine desuccinylation impacts diverse metabolic pathways.</title>
        <authorList>
            <person name="Park J."/>
            <person name="Chen Y."/>
            <person name="Tishkoff D.X."/>
            <person name="Peng C."/>
            <person name="Tan M."/>
            <person name="Dai L."/>
            <person name="Xie Z."/>
            <person name="Zhang Y."/>
            <person name="Zwaans B.M."/>
            <person name="Skinner M.E."/>
            <person name="Lombard D.B."/>
            <person name="Zhao Y."/>
        </authorList>
    </citation>
    <scope>ACETYLATION [LARGE SCALE ANALYSIS] AT LYS-1496</scope>
    <scope>IDENTIFICATION BY MASS SPECTROMETRY [LARGE SCALE ANALYSIS]</scope>
    <source>
        <tissue>Embryonic fibroblast</tissue>
    </source>
</reference>
<feature type="chain" id="PRO_0000096318" description="Mediator of DNA damage checkpoint protein 1">
    <location>
        <begin position="1"/>
        <end position="1707"/>
    </location>
</feature>
<feature type="domain" description="FHA" evidence="5">
    <location>
        <begin position="54"/>
        <end position="105"/>
    </location>
</feature>
<feature type="domain" description="BRCT 1" evidence="4">
    <location>
        <begin position="1510"/>
        <end position="1588"/>
    </location>
</feature>
<feature type="domain" description="BRCT 2" evidence="4">
    <location>
        <begin position="1609"/>
        <end position="1700"/>
    </location>
</feature>
<feature type="region of interest" description="Interaction with CHEK2" evidence="1">
    <location>
        <begin position="1"/>
        <end position="150"/>
    </location>
</feature>
<feature type="region of interest" description="Disordered" evidence="6">
    <location>
        <begin position="1"/>
        <end position="23"/>
    </location>
</feature>
<feature type="region of interest" description="Interaction with the MRN complex" evidence="1">
    <location>
        <begin position="2"/>
        <end position="222"/>
    </location>
</feature>
<feature type="region of interest" description="Disordered" evidence="6">
    <location>
        <begin position="166"/>
        <end position="328"/>
    </location>
</feature>
<feature type="region of interest" description="Disordered" evidence="6">
    <location>
        <begin position="369"/>
        <end position="398"/>
    </location>
</feature>
<feature type="region of interest" description="Disordered" evidence="6">
    <location>
        <begin position="417"/>
        <end position="497"/>
    </location>
</feature>
<feature type="region of interest" description="Disordered" evidence="6">
    <location>
        <begin position="520"/>
        <end position="642"/>
    </location>
</feature>
<feature type="region of interest" description="Disordered" evidence="6">
    <location>
        <begin position="679"/>
        <end position="699"/>
    </location>
</feature>
<feature type="region of interest" description="Disordered" evidence="6">
    <location>
        <begin position="718"/>
        <end position="746"/>
    </location>
</feature>
<feature type="region of interest" description="Disordered" evidence="6">
    <location>
        <begin position="778"/>
        <end position="899"/>
    </location>
</feature>
<feature type="region of interest" description="Disordered" evidence="6">
    <location>
        <begin position="914"/>
        <end position="1510"/>
    </location>
</feature>
<feature type="compositionally biased region" description="Acidic residues" evidence="6">
    <location>
        <begin position="9"/>
        <end position="18"/>
    </location>
</feature>
<feature type="compositionally biased region" description="Polar residues" evidence="6">
    <location>
        <begin position="183"/>
        <end position="192"/>
    </location>
</feature>
<feature type="compositionally biased region" description="Polar residues" evidence="6">
    <location>
        <begin position="252"/>
        <end position="263"/>
    </location>
</feature>
<feature type="compositionally biased region" description="Basic and acidic residues" evidence="6">
    <location>
        <begin position="264"/>
        <end position="278"/>
    </location>
</feature>
<feature type="compositionally biased region" description="Basic and acidic residues" evidence="6">
    <location>
        <begin position="369"/>
        <end position="378"/>
    </location>
</feature>
<feature type="compositionally biased region" description="Acidic residues" evidence="6">
    <location>
        <begin position="386"/>
        <end position="397"/>
    </location>
</feature>
<feature type="compositionally biased region" description="Polar residues" evidence="6">
    <location>
        <begin position="425"/>
        <end position="439"/>
    </location>
</feature>
<feature type="compositionally biased region" description="Polar residues" evidence="6">
    <location>
        <begin position="580"/>
        <end position="595"/>
    </location>
</feature>
<feature type="compositionally biased region" description="Basic and acidic residues" evidence="6">
    <location>
        <begin position="626"/>
        <end position="642"/>
    </location>
</feature>
<feature type="compositionally biased region" description="Basic and acidic residues" evidence="6">
    <location>
        <begin position="719"/>
        <end position="730"/>
    </location>
</feature>
<feature type="compositionally biased region" description="Basic and acidic residues" evidence="6">
    <location>
        <begin position="778"/>
        <end position="804"/>
    </location>
</feature>
<feature type="compositionally biased region" description="Basic and acidic residues" evidence="6">
    <location>
        <begin position="812"/>
        <end position="868"/>
    </location>
</feature>
<feature type="compositionally biased region" description="Basic and acidic residues" evidence="6">
    <location>
        <begin position="875"/>
        <end position="889"/>
    </location>
</feature>
<feature type="compositionally biased region" description="Low complexity" evidence="6">
    <location>
        <begin position="968"/>
        <end position="986"/>
    </location>
</feature>
<feature type="compositionally biased region" description="Polar residues" evidence="6">
    <location>
        <begin position="1026"/>
        <end position="1056"/>
    </location>
</feature>
<feature type="compositionally biased region" description="Polar residues" evidence="6">
    <location>
        <begin position="1068"/>
        <end position="1086"/>
    </location>
</feature>
<feature type="compositionally biased region" description="Polar residues" evidence="6">
    <location>
        <begin position="1101"/>
        <end position="1113"/>
    </location>
</feature>
<feature type="compositionally biased region" description="Polar residues" evidence="6">
    <location>
        <begin position="1225"/>
        <end position="1241"/>
    </location>
</feature>
<feature type="compositionally biased region" description="Polar residues" evidence="6">
    <location>
        <begin position="1265"/>
        <end position="1281"/>
    </location>
</feature>
<feature type="compositionally biased region" description="Polar residues" evidence="6">
    <location>
        <begin position="1295"/>
        <end position="1308"/>
    </location>
</feature>
<feature type="compositionally biased region" description="Polar residues" evidence="6">
    <location>
        <begin position="1317"/>
        <end position="1326"/>
    </location>
</feature>
<feature type="compositionally biased region" description="Polar residues" evidence="6">
    <location>
        <begin position="1343"/>
        <end position="1363"/>
    </location>
</feature>
<feature type="compositionally biased region" description="Low complexity" evidence="6">
    <location>
        <begin position="1364"/>
        <end position="1376"/>
    </location>
</feature>
<feature type="compositionally biased region" description="Pro residues" evidence="6">
    <location>
        <begin position="1378"/>
        <end position="1393"/>
    </location>
</feature>
<feature type="compositionally biased region" description="Low complexity" evidence="6">
    <location>
        <begin position="1421"/>
        <end position="1441"/>
    </location>
</feature>
<feature type="compositionally biased region" description="Basic and acidic residues" evidence="6">
    <location>
        <begin position="1459"/>
        <end position="1473"/>
    </location>
</feature>
<feature type="compositionally biased region" description="Basic and acidic residues" evidence="6">
    <location>
        <begin position="1481"/>
        <end position="1493"/>
    </location>
</feature>
<feature type="modified residue" description="Phosphothreonine" evidence="2">
    <location>
        <position position="4"/>
    </location>
</feature>
<feature type="modified residue" description="Phosphothreonine" evidence="2">
    <location>
        <position position="146"/>
    </location>
</feature>
<feature type="modified residue" description="Phosphoserine" evidence="9 10 11 12">
    <location>
        <position position="168"/>
    </location>
</feature>
<feature type="modified residue" description="Phosphoserine" evidence="3">
    <location>
        <position position="176"/>
    </location>
</feature>
<feature type="modified residue" description="Phosphoserine" evidence="2">
    <location>
        <position position="198"/>
    </location>
</feature>
<feature type="modified residue" description="Phosphoserine" evidence="2">
    <location>
        <position position="220"/>
    </location>
</feature>
<feature type="modified residue" description="Phosphothreonine" evidence="2">
    <location>
        <position position="222"/>
    </location>
</feature>
<feature type="modified residue" description="Phosphoserine" evidence="2">
    <location>
        <position position="298"/>
    </location>
</feature>
<feature type="modified residue" description="Phosphothreonine" evidence="2">
    <location>
        <position position="300"/>
    </location>
</feature>
<feature type="modified residue" description="Phosphoserine" evidence="2">
    <location>
        <position position="313"/>
    </location>
</feature>
<feature type="modified residue" description="Phosphothreonine" evidence="2">
    <location>
        <position position="315"/>
    </location>
</feature>
<feature type="modified residue" description="Phosphoserine" evidence="2">
    <location>
        <position position="360"/>
    </location>
</feature>
<feature type="modified residue" description="Phosphothreonine" evidence="2">
    <location>
        <position position="362"/>
    </location>
</feature>
<feature type="modified residue" description="Phosphoserine" evidence="2">
    <location>
        <position position="385"/>
    </location>
</feature>
<feature type="modified residue" description="Phosphothreonine" evidence="2">
    <location>
        <position position="387"/>
    </location>
</feature>
<feature type="modified residue" description="Phosphoserine" evidence="2">
    <location>
        <position position="398"/>
    </location>
</feature>
<feature type="modified residue" description="Phosphoserine" evidence="3">
    <location>
        <position position="415"/>
    </location>
</feature>
<feature type="modified residue" description="Phosphoserine" evidence="3">
    <location>
        <position position="425"/>
    </location>
</feature>
<feature type="modified residue" description="Phosphoserine" evidence="9 12">
    <location>
        <position position="438"/>
    </location>
</feature>
<feature type="modified residue" description="Phosphoserine" evidence="9 12">
    <location>
        <position position="442"/>
    </location>
</feature>
<feature type="modified residue" description="Phosphothreonine" evidence="9 12">
    <location>
        <position position="444"/>
    </location>
</feature>
<feature type="modified residue" description="Phosphoserine" evidence="12">
    <location>
        <position position="461"/>
    </location>
</feature>
<feature type="modified residue" description="Phosphothreonine" evidence="12">
    <location>
        <position position="470"/>
    </location>
</feature>
<feature type="modified residue" description="Phosphoserine" evidence="12">
    <location>
        <position position="492"/>
    </location>
</feature>
<feature type="modified residue" description="Phosphoserine" evidence="12">
    <location>
        <position position="493"/>
    </location>
</feature>
<feature type="modified residue" description="Phosphoserine" evidence="12">
    <location>
        <position position="591"/>
    </location>
</feature>
<feature type="modified residue" description="Phosphoserine" evidence="12">
    <location>
        <position position="593"/>
    </location>
</feature>
<feature type="modified residue" description="Phosphoserine" evidence="12">
    <location>
        <position position="595"/>
    </location>
</feature>
<feature type="modified residue" description="Phosphoserine" evidence="2">
    <location>
        <position position="735"/>
    </location>
</feature>
<feature type="modified residue" description="Phosphoserine" evidence="2">
    <location>
        <position position="750"/>
    </location>
</feature>
<feature type="modified residue" description="N6-acetyllysine" evidence="2">
    <location>
        <position position="769"/>
    </location>
</feature>
<feature type="modified residue" description="Phosphoserine" evidence="2">
    <location>
        <position position="885"/>
    </location>
</feature>
<feature type="modified residue" description="Phosphoserine" evidence="2">
    <location>
        <position position="929"/>
    </location>
</feature>
<feature type="modified residue" description="Phosphoserine" evidence="3">
    <location>
        <position position="962"/>
    </location>
</feature>
<feature type="modified residue" description="Phosphoserine" evidence="2">
    <location>
        <position position="991"/>
    </location>
</feature>
<feature type="modified residue" description="Phosphothreonine" evidence="12">
    <location>
        <position position="1056"/>
    </location>
</feature>
<feature type="modified residue" description="Phosphoserine" evidence="12">
    <location>
        <position position="1104"/>
    </location>
</feature>
<feature type="modified residue" description="Phosphoserine" evidence="12">
    <location>
        <position position="1126"/>
    </location>
</feature>
<feature type="modified residue" description="Phosphoserine" evidence="12">
    <location>
        <position position="1128"/>
    </location>
</feature>
<feature type="modified residue" description="Phosphothreonine" evidence="12">
    <location>
        <position position="1132"/>
    </location>
</feature>
<feature type="modified residue" description="Phosphothreonine" evidence="2">
    <location>
        <position position="1173"/>
    </location>
</feature>
<feature type="modified residue" description="Phosphothreonine" evidence="2">
    <location>
        <position position="1234"/>
    </location>
</feature>
<feature type="modified residue" description="Phosphothreonine" evidence="12">
    <location>
        <position position="1297"/>
    </location>
</feature>
<feature type="modified residue" description="Phosphothreonine" evidence="12">
    <location>
        <position position="1298"/>
    </location>
</feature>
<feature type="modified residue" description="Phosphoserine" evidence="2">
    <location>
        <position position="1327"/>
    </location>
</feature>
<feature type="modified residue" description="Phosphothreonine" evidence="2">
    <location>
        <position position="1352"/>
    </location>
</feature>
<feature type="modified residue" description="Phosphoserine" evidence="2">
    <location>
        <position position="1359"/>
    </location>
</feature>
<feature type="modified residue" description="Phosphothreonine" evidence="2">
    <location>
        <position position="1375"/>
    </location>
</feature>
<feature type="modified residue" description="Phosphoserine" evidence="12">
    <location>
        <position position="1435"/>
    </location>
</feature>
<feature type="modified residue" description="Phosphoserine" evidence="12">
    <location>
        <position position="1436"/>
    </location>
</feature>
<feature type="modified residue" description="Phosphoserine" evidence="12">
    <location>
        <position position="1439"/>
    </location>
</feature>
<feature type="modified residue" description="Phosphoserine" evidence="12">
    <location>
        <position position="1443"/>
    </location>
</feature>
<feature type="modified residue" description="Phosphothreonine" evidence="12">
    <location>
        <position position="1480"/>
    </location>
</feature>
<feature type="modified residue" description="N6-acetyllysine" evidence="13">
    <location>
        <position position="1496"/>
    </location>
</feature>
<feature type="cross-link" description="Glycyl lysine isopeptide (Lys-Gly) (interchain with G-Cter in SUMO2)" evidence="2">
    <location>
        <position position="1418"/>
    </location>
</feature>
<feature type="cross-link" description="Glycyl lysine isopeptide (Lys-Gly) (interchain with G-Cter in SUMO1); alternate" evidence="2">
    <location>
        <position position="1461"/>
    </location>
</feature>
<feature type="cross-link" description="Glycyl lysine isopeptide (Lys-Gly) (interchain with G-Cter in SUMO2); alternate" evidence="2">
    <location>
        <position position="1461"/>
    </location>
</feature>
<feature type="sequence conflict" description="In Ref. 2; AAH94363." evidence="8" ref="2">
    <original>E</original>
    <variation>EE</variation>
    <location>
        <position position="396"/>
    </location>
</feature>
<feature type="strand" evidence="14">
    <location>
        <begin position="31"/>
        <end position="36"/>
    </location>
</feature>
<feature type="strand" evidence="14">
    <location>
        <begin position="45"/>
        <end position="49"/>
    </location>
</feature>
<feature type="strand" evidence="14">
    <location>
        <begin position="51"/>
        <end position="59"/>
    </location>
</feature>
<feature type="strand" evidence="14">
    <location>
        <begin position="62"/>
        <end position="65"/>
    </location>
</feature>
<feature type="strand" evidence="14">
    <location>
        <begin position="76"/>
        <end position="80"/>
    </location>
</feature>
<feature type="strand" evidence="14">
    <location>
        <begin position="88"/>
        <end position="91"/>
    </location>
</feature>
<feature type="strand" evidence="14">
    <location>
        <begin position="98"/>
        <end position="100"/>
    </location>
</feature>
<feature type="turn" evidence="14">
    <location>
        <begin position="101"/>
        <end position="104"/>
    </location>
</feature>
<feature type="strand" evidence="14">
    <location>
        <begin position="105"/>
        <end position="107"/>
    </location>
</feature>
<feature type="strand" evidence="14">
    <location>
        <begin position="120"/>
        <end position="123"/>
    </location>
</feature>
<feature type="strand" evidence="14">
    <location>
        <begin position="126"/>
        <end position="132"/>
    </location>
</feature>
<proteinExistence type="evidence at protein level"/>
<dbReference type="EMBL" id="AY826432">
    <property type="protein sequence ID" value="AAV85449.1"/>
    <property type="molecule type" value="Genomic_DNA"/>
</dbReference>
<dbReference type="EMBL" id="BC085140">
    <property type="protein sequence ID" value="AAH85140.1"/>
    <property type="molecule type" value="mRNA"/>
</dbReference>
<dbReference type="EMBL" id="BC094363">
    <property type="protein sequence ID" value="AAH94363.1"/>
    <property type="molecule type" value="mRNA"/>
</dbReference>
<dbReference type="EMBL" id="AK129074">
    <property type="protein sequence ID" value="BAC97884.1"/>
    <property type="molecule type" value="mRNA"/>
</dbReference>
<dbReference type="RefSeq" id="NP_001010833.2">
    <property type="nucleotide sequence ID" value="NM_001010833.2"/>
</dbReference>
<dbReference type="PDB" id="3VA1">
    <property type="method" value="X-ray"/>
    <property type="resolution" value="1.74 A"/>
    <property type="chains" value="A/B=29-139"/>
</dbReference>
<dbReference type="PDB" id="3VA4">
    <property type="method" value="X-ray"/>
    <property type="resolution" value="1.54 A"/>
    <property type="chains" value="A/B=29-139"/>
</dbReference>
<dbReference type="PDBsum" id="3VA1"/>
<dbReference type="PDBsum" id="3VA4"/>
<dbReference type="SMR" id="Q5PSV9"/>
<dbReference type="BioGRID" id="232163">
    <property type="interactions" value="6"/>
</dbReference>
<dbReference type="FunCoup" id="Q5PSV9">
    <property type="interactions" value="2506"/>
</dbReference>
<dbReference type="STRING" id="10090.ENSMUSP00000080949"/>
<dbReference type="GlyGen" id="Q5PSV9">
    <property type="glycosylation" value="4 sites, 1 N-linked glycan (1 site), 1 O-linked glycan (1 site)"/>
</dbReference>
<dbReference type="iPTMnet" id="Q5PSV9"/>
<dbReference type="PhosphoSitePlus" id="Q5PSV9"/>
<dbReference type="SwissPalm" id="Q5PSV9"/>
<dbReference type="jPOST" id="Q5PSV9"/>
<dbReference type="PaxDb" id="10090-ENSMUSP00000080949"/>
<dbReference type="PeptideAtlas" id="Q5PSV9"/>
<dbReference type="ProteomicsDB" id="293442"/>
<dbReference type="Pumba" id="Q5PSV9"/>
<dbReference type="GeneID" id="240087"/>
<dbReference type="KEGG" id="mmu:240087"/>
<dbReference type="AGR" id="MGI:3525201"/>
<dbReference type="CTD" id="9656"/>
<dbReference type="MGI" id="MGI:3525201">
    <property type="gene designation" value="Mdc1"/>
</dbReference>
<dbReference type="eggNOG" id="KOG2043">
    <property type="taxonomic scope" value="Eukaryota"/>
</dbReference>
<dbReference type="InParanoid" id="Q5PSV9"/>
<dbReference type="OrthoDB" id="342264at2759"/>
<dbReference type="PhylomeDB" id="Q5PSV9"/>
<dbReference type="Reactome" id="R-MMU-3108214">
    <property type="pathway name" value="SUMOylation of DNA damage response and repair proteins"/>
</dbReference>
<dbReference type="Reactome" id="R-MMU-5693565">
    <property type="pathway name" value="Recruitment and ATM-mediated phosphorylation of repair and signaling proteins at DNA double strand breaks"/>
</dbReference>
<dbReference type="Reactome" id="R-MMU-5693571">
    <property type="pathway name" value="Nonhomologous End-Joining (NHEJ)"/>
</dbReference>
<dbReference type="Reactome" id="R-MMU-5693607">
    <property type="pathway name" value="Processing of DNA double-strand break ends"/>
</dbReference>
<dbReference type="Reactome" id="R-MMU-69473">
    <property type="pathway name" value="G2/M DNA damage checkpoint"/>
</dbReference>
<dbReference type="BioGRID-ORCS" id="240087">
    <property type="hits" value="28 hits in 116 CRISPR screens"/>
</dbReference>
<dbReference type="ChiTaRS" id="Mdc1">
    <property type="organism name" value="mouse"/>
</dbReference>
<dbReference type="EvolutionaryTrace" id="Q5PSV9"/>
<dbReference type="PRO" id="PR:Q5PSV9"/>
<dbReference type="Proteomes" id="UP000000589">
    <property type="component" value="Unplaced"/>
</dbReference>
<dbReference type="RNAct" id="Q5PSV9">
    <property type="molecule type" value="protein"/>
</dbReference>
<dbReference type="GO" id="GO:0005694">
    <property type="term" value="C:chromosome"/>
    <property type="evidence" value="ECO:0000314"/>
    <property type="project" value="UniProtKB"/>
</dbReference>
<dbReference type="GO" id="GO:0005634">
    <property type="term" value="C:nucleus"/>
    <property type="evidence" value="ECO:0000266"/>
    <property type="project" value="MGI"/>
</dbReference>
<dbReference type="GO" id="GO:0035861">
    <property type="term" value="C:site of double-strand break"/>
    <property type="evidence" value="ECO:0000250"/>
    <property type="project" value="UniProtKB"/>
</dbReference>
<dbReference type="GO" id="GO:0140463">
    <property type="term" value="F:chromatin-protein adaptor activity"/>
    <property type="evidence" value="ECO:0000250"/>
    <property type="project" value="UniProtKB"/>
</dbReference>
<dbReference type="GO" id="GO:0140566">
    <property type="term" value="F:histone reader activity"/>
    <property type="evidence" value="ECO:0000250"/>
    <property type="project" value="UniProtKB"/>
</dbReference>
<dbReference type="GO" id="GO:0006281">
    <property type="term" value="P:DNA repair"/>
    <property type="evidence" value="ECO:0007669"/>
    <property type="project" value="UniProtKB-KW"/>
</dbReference>
<dbReference type="GO" id="GO:0000076">
    <property type="term" value="P:DNA replication checkpoint signaling"/>
    <property type="evidence" value="ECO:0000250"/>
    <property type="project" value="UniProtKB"/>
</dbReference>
<dbReference type="GO" id="GO:1990166">
    <property type="term" value="P:protein localization to site of double-strand break"/>
    <property type="evidence" value="ECO:0000250"/>
    <property type="project" value="UniProtKB"/>
</dbReference>
<dbReference type="CDD" id="cd17744">
    <property type="entry name" value="BRCT_MDC1_rpt1"/>
    <property type="match status" value="1"/>
</dbReference>
<dbReference type="CDD" id="cd18441">
    <property type="entry name" value="BRCT_MDC1_rpt2"/>
    <property type="match status" value="1"/>
</dbReference>
<dbReference type="CDD" id="cd22665">
    <property type="entry name" value="FHA_MDC1"/>
    <property type="match status" value="1"/>
</dbReference>
<dbReference type="Gene3D" id="2.60.200.20">
    <property type="match status" value="1"/>
</dbReference>
<dbReference type="Gene3D" id="3.40.50.10190">
    <property type="entry name" value="BRCT domain"/>
    <property type="match status" value="2"/>
</dbReference>
<dbReference type="InterPro" id="IPR001357">
    <property type="entry name" value="BRCT_dom"/>
</dbReference>
<dbReference type="InterPro" id="IPR036420">
    <property type="entry name" value="BRCT_dom_sf"/>
</dbReference>
<dbReference type="InterPro" id="IPR051579">
    <property type="entry name" value="DDR_Transcriptional_Reg"/>
</dbReference>
<dbReference type="InterPro" id="IPR000253">
    <property type="entry name" value="FHA_dom"/>
</dbReference>
<dbReference type="InterPro" id="IPR008984">
    <property type="entry name" value="SMAD_FHA_dom_sf"/>
</dbReference>
<dbReference type="PANTHER" id="PTHR23196:SF34">
    <property type="entry name" value="MEDIATOR OF DNA DAMAGE CHECKPOINT PROTEIN 1"/>
    <property type="match status" value="1"/>
</dbReference>
<dbReference type="PANTHER" id="PTHR23196">
    <property type="entry name" value="PAX TRANSCRIPTION ACTIVATION DOMAIN INTERACTING PROTEIN"/>
    <property type="match status" value="1"/>
</dbReference>
<dbReference type="Pfam" id="PF16589">
    <property type="entry name" value="BRCT_2"/>
    <property type="match status" value="1"/>
</dbReference>
<dbReference type="Pfam" id="PF00498">
    <property type="entry name" value="FHA"/>
    <property type="match status" value="1"/>
</dbReference>
<dbReference type="Pfam" id="PF16770">
    <property type="entry name" value="RTT107_BRCT_5"/>
    <property type="match status" value="1"/>
</dbReference>
<dbReference type="SMART" id="SM00292">
    <property type="entry name" value="BRCT"/>
    <property type="match status" value="2"/>
</dbReference>
<dbReference type="SMART" id="SM00240">
    <property type="entry name" value="FHA"/>
    <property type="match status" value="1"/>
</dbReference>
<dbReference type="SUPFAM" id="SSF52113">
    <property type="entry name" value="BRCT domain"/>
    <property type="match status" value="1"/>
</dbReference>
<dbReference type="SUPFAM" id="SSF49879">
    <property type="entry name" value="SMAD/FHA domain"/>
    <property type="match status" value="1"/>
</dbReference>
<dbReference type="PROSITE" id="PS50172">
    <property type="entry name" value="BRCT"/>
    <property type="match status" value="1"/>
</dbReference>
<dbReference type="PROSITE" id="PS50006">
    <property type="entry name" value="FHA_DOMAIN"/>
    <property type="match status" value="1"/>
</dbReference>
<protein>
    <recommendedName>
        <fullName>Mediator of DNA damage checkpoint protein 1</fullName>
    </recommendedName>
</protein>
<evidence type="ECO:0000250" key="1"/>
<evidence type="ECO:0000250" key="2">
    <source>
        <dbReference type="UniProtKB" id="Q14676"/>
    </source>
</evidence>
<evidence type="ECO:0000250" key="3">
    <source>
        <dbReference type="UniProtKB" id="Q5U2M8"/>
    </source>
</evidence>
<evidence type="ECO:0000255" key="4">
    <source>
        <dbReference type="PROSITE-ProRule" id="PRU00033"/>
    </source>
</evidence>
<evidence type="ECO:0000255" key="5">
    <source>
        <dbReference type="PROSITE-ProRule" id="PRU00086"/>
    </source>
</evidence>
<evidence type="ECO:0000256" key="6">
    <source>
        <dbReference type="SAM" id="MobiDB-lite"/>
    </source>
</evidence>
<evidence type="ECO:0000269" key="7">
    <source>
    </source>
</evidence>
<evidence type="ECO:0000305" key="8"/>
<evidence type="ECO:0007744" key="9">
    <source>
    </source>
</evidence>
<evidence type="ECO:0007744" key="10">
    <source>
    </source>
</evidence>
<evidence type="ECO:0007744" key="11">
    <source>
    </source>
</evidence>
<evidence type="ECO:0007744" key="12">
    <source>
    </source>
</evidence>
<evidence type="ECO:0007744" key="13">
    <source>
    </source>
</evidence>
<evidence type="ECO:0007829" key="14">
    <source>
        <dbReference type="PDB" id="3VA4"/>
    </source>
</evidence>
<gene>
    <name type="primary">Mdc1</name>
    <name type="synonym">Kiaa0170</name>
</gene>
<name>MDC1_MOUSE</name>
<sequence>MESTQVIDWDAEEEEETELSSGSLGYSVEPIGQLRLFSGTHGPERDFPLYLGKNVVGRSPDCSVALPFPSISKQHAVIEISAWNKAPILQDCGSLNGTQIVKPPRVLPPGVSHRLRDQELILFADFPCQYHRLDVPPPLVPRSLLTIEKTPRIRIESQNSRVLLAADSEEEGDFPSGRCVANGQRNTASPSATVVPESDEEVSSPAPSVPGPSSPFGLGSDTDEEQGQQPGVEESSLADSSGAAGEAEQPEANGTTAGIQAQPTEHKLKDTKVKKEAGRAGVSDGSVLERSPTLGEDSDTEVDEDHKPGFADSETDVEEERIPVTPPVAPVKKNQVLLAVGIGDPEAPGVAHLQDCLAGSGTDVEDKTALDVPLERNHTPMVINSDTDEEEEEEEEVSAALTLAHLKERGIGLWSRDPGAEEVKSQPQVLVEQSQSASGRDSDTDVEEESSGRKREIIPDSPMDVDEALTVTQPESQPPRRPNDADEYMDMSSPGSHLVVNQASFAVVGKTRAQVEEEVPGPSVILGEKHQVPLEGAQPPEEAWETAVQEGSSSPEAAASVRPSQQPVAEDAGTECATAVSEQESTLEVRSQSGSPAAPVEQVVIHTDTSGDPTLPQREGAQTPTGREREAHVGRTKSAKECCDAEPEDLCLPATQCFVEGESQHPEAVQSLENEPTQLFPCTLPQEPGPSHLSLQTPGADTLDVPWEVLATQPFCLREQSETSELHEAHGSQPSLPREPPGHQHLVHTSPVHTELLRIEGREIQTVEKAMGIPKEMADRMTPEREPLEREIRGRTENSERDVIGEELIQGTKDREPKKVLARDSQRKEADKDLEGNRESLEVEIEMSKDSQKRERKVEKPEPKREWEPADLEVTPDRGVTEEGSHDQKGQIASLTLKPGVGVKDLEGLASAPIITGSQADGGKGDPLSPGRQQRGRLSCQTTPAGKASRGDPEPPDHCLFSSVPEASTQSLLTSQSQKQSTPQPLFSTSSSEIPLPESLHTKPNVRPRRSSRMTPSPHSSAALKPNTTCPTNQPAASRPTSRPTRGRANRSSTRTPELIVPVDPELQPSTSTEQPVIPKLTSQVTEGRVQMPEPLLTGPEIQSPTSTEQSVTPDRKPRATRGRPSKSPNKTPEPLISTGPELQPPTSIEQPVIPKPTSRVTRGRPRKSSVRTPESVVSTGPELQPLTSIEQPVIPEPRATRGRPSKSSIKTPESVVPTGPELQPLTSAKQPVTPNLTSRASRGRSSKSIRTPEPVVQTGPEFHPSTSTEQPDTREPSSQARTRRSAVKTPEASVPTTPELQPFTSKKQPAPKPTALVTQGRTYKPSTEDCESVGPVAPDFEPSTSTDHLVTPKVTDQSLTLQSSPLSASPVSSTPDLKPPVPIAQPVTPEPIPQANHQRKRRAAGKQGSRTVPLGHKSYSALSEPEPQSSASQSSGASEADSPRQKRPRRQASQKTVVIKEEPVETEVKEEPQETAIPTPEKRKRDHAEEVTQGKPTRSRRTKPNQETAPKVLFTGVMDSRGERAVLALGGSLASSVNEASHLVTDRIRRTVKFLCALGKGIPILSLNWLYQSRKAGCFLPPDDYLVTDPEQEKNFSFSLRDSLCRARERRLLEDYEIHVTPGVQPPPPQMGEIISCCGGTFLPSMPHSYKLHRVIITCTEDLPRCAIPSRLGLPLLSPEFLLTGVLKQEATPEAFVLSNLEMSST</sequence>
<comment type="function">
    <text evidence="2">Histone reader protein required for checkpoint-mediated cell cycle arrest in response to DNA damage within both the S phase and G2/M phases of the cell cycle. Specifically recognizes and binds histone H2AX phosphorylated at 'Ser-139', a marker of DNA damage, serving as a scaffold for the recruitment of DNA repair and signal transduction proteins to discrete foci of DNA damage sites. Also required for downstream events subsequent to the recruitment of these proteins. These include phosphorylation and activation of the ATM, CHEK1 and CHEK2 kinases, and stabilization of TP53/p53 and apoptosis. ATM and CHEK2 may also be activated independently by a parallel pathway mediated by TP53BP1. Required for chromosomal stability during mitosis by promoting recruitment of TOPBP1 to DNA double strand breaks (DSBs): TOPBP1 forms filamentous assemblies that bridge MDC1 and tether broken chromosomes during mitosis. Required for the repair of DSBs via homologous recombination by promoting recruitment of NBN component of the MRN complex to DSBs.</text>
</comment>
<comment type="subunit">
    <text evidence="2 7">Homodimer (By similarity). Interacts with H2AX, which requires phosphorylation of H2AX on 'Ser-139' (PubMed:15611643). Interacts with the MRN complex, composed of MRE11, RAD50, and NBN (By similarity). Interacts with CHEK2, which requires ATM-mediated phosphorylation of 'Thr-68' within the FHA domain of CHEK2 (By similarity). Interacts constitutively with the BRCA1-BARD1 complex, SMC1A and TP53BP1 (By similarity). Interacts with ATM and FANCD2, and these interactions are reduced upon DNA damage (By similarity). Also interacts with the PRKDC complex, composed of XRCC6/KU70, XRCC5/KU80 and PRKDC/XRCC7 (By similarity). This interaction may be required for PRKDC autophosphorylation, which is essential for DNA double strand break (DSB) repair (By similarity). When phosphorylated by ATM, interacts with RNF8 (via FHA domain) (By similarity). Interacts with CEP164 (By similarity). When phosphorylated, interacts with APTX (via FHA-like domain) (By similarity). Interacts (when phosphorylated) with TOPBP1; promoting TOPBP1 localization to DNA damage sites during mitosis (By similarity). Interacts (when phosphorylated) with NBN; promoting NBN and MRN complex localization to DNA damage sites (By similarity).</text>
</comment>
<comment type="subcellular location">
    <subcellularLocation>
        <location evidence="2">Nucleus</location>
    </subcellularLocation>
    <subcellularLocation>
        <location evidence="7">Chromosome</location>
    </subcellularLocation>
    <text evidence="2">Associated with chromatin (By similarity). Relocalizes to discrete nuclear foci following DNA damage, this requires 'Ser-139' phosphorylation of H2AX (By similarity). Colocalizes with APTX at sites of DNA double-strand breaks (By similarity).</text>
</comment>
<comment type="domain">
    <text evidence="2">Tandemly repeated BRCT domains are characteristic of proteins involved in DNA damage signaling. In MDC1, these repeats are required for localization to chromatin which flanks sites of DNA damage marked by 'Ser-139' phosphorylation of H2AX.</text>
</comment>
<comment type="PTM">
    <text evidence="2">Phosphorylated upon exposure to ionizing radiation (IR), ultraviolet radiation (UV), and hydroxyurea (HU). Phosphorylation in response to IR requires ATM, NBN, and possibly CHEK2. Also phosphorylated during the G2/M phase of the cell cycle and during activation of the mitotic spindle checkpoint. Phosphorylation at Thr-4 by ATM stabilizes and enhances homodimerization via the FHA domain. Phosphorylated at Ser-168 and Ser-198 by CK2 in response to DNA damage during mitosis, promoting interaction with TOPBP1. Phosphorylated by CK2 in response to DNA damage, promoting interaction with NBN and recruitment of the MRN complex to DNA damage sites.</text>
</comment>
<comment type="PTM">
    <text evidence="2">Sumoylation at Lys-1461 by PIAS4 following DNA damage promotes ubiquitin-mediated degradation.</text>
</comment>
<comment type="PTM">
    <text evidence="2">Ubiquitinated by RNF4, leading to proteasomal degradation; undergoes 'Lys-48'-linked polyubiquitination.</text>
</comment>
<organism>
    <name type="scientific">Mus musculus</name>
    <name type="common">Mouse</name>
    <dbReference type="NCBI Taxonomy" id="10090"/>
    <lineage>
        <taxon>Eukaryota</taxon>
        <taxon>Metazoa</taxon>
        <taxon>Chordata</taxon>
        <taxon>Craniata</taxon>
        <taxon>Vertebrata</taxon>
        <taxon>Euteleostomi</taxon>
        <taxon>Mammalia</taxon>
        <taxon>Eutheria</taxon>
        <taxon>Euarchontoglires</taxon>
        <taxon>Glires</taxon>
        <taxon>Rodentia</taxon>
        <taxon>Myomorpha</taxon>
        <taxon>Muroidea</taxon>
        <taxon>Muridae</taxon>
        <taxon>Murinae</taxon>
        <taxon>Mus</taxon>
        <taxon>Mus</taxon>
    </lineage>
</organism>
<keyword id="KW-0002">3D-structure</keyword>
<keyword id="KW-0007">Acetylation</keyword>
<keyword id="KW-0131">Cell cycle</keyword>
<keyword id="KW-0158">Chromosome</keyword>
<keyword id="KW-0175">Coiled coil</keyword>
<keyword id="KW-0227">DNA damage</keyword>
<keyword id="KW-0234">DNA repair</keyword>
<keyword id="KW-1017">Isopeptide bond</keyword>
<keyword id="KW-0539">Nucleus</keyword>
<keyword id="KW-0597">Phosphoprotein</keyword>
<keyword id="KW-1185">Reference proteome</keyword>
<keyword id="KW-0677">Repeat</keyword>
<keyword id="KW-0832">Ubl conjugation</keyword>
<accession>Q5PSV9</accession>
<accession>Q52KG1</accession>
<accession>Q5U4D3</accession>
<accession>Q6ZQH7</accession>